<accession>B0BUE6</accession>
<reference key="1">
    <citation type="journal article" date="2008" name="PLoS ONE">
        <title>Genome biology of Actinobacillus pleuropneumoniae JL03, an isolate of serotype 3 prevalent in China.</title>
        <authorList>
            <person name="Xu Z."/>
            <person name="Zhou Y."/>
            <person name="Li L."/>
            <person name="Zhou R."/>
            <person name="Xiao S."/>
            <person name="Wan Y."/>
            <person name="Zhang S."/>
            <person name="Wang K."/>
            <person name="Li W."/>
            <person name="Li L."/>
            <person name="Jin H."/>
            <person name="Kang M."/>
            <person name="Dalai B."/>
            <person name="Li T."/>
            <person name="Liu L."/>
            <person name="Cheng Y."/>
            <person name="Zhang L."/>
            <person name="Xu T."/>
            <person name="Zheng H."/>
            <person name="Pu S."/>
            <person name="Wang B."/>
            <person name="Gu W."/>
            <person name="Zhang X.L."/>
            <person name="Zhu G.-F."/>
            <person name="Wang S."/>
            <person name="Zhao G.-P."/>
            <person name="Chen H."/>
        </authorList>
    </citation>
    <scope>NUCLEOTIDE SEQUENCE [LARGE SCALE GENOMIC DNA]</scope>
    <source>
        <strain>JL03</strain>
    </source>
</reference>
<comment type="function">
    <text evidence="1">Catalyzes the last two sequential reactions in the de novo biosynthetic pathway for UDP-N-acetylglucosamine (UDP-GlcNAc). The C-terminal domain catalyzes the transfer of acetyl group from acetyl coenzyme A to glucosamine-1-phosphate (GlcN-1-P) to produce N-acetylglucosamine-1-phosphate (GlcNAc-1-P), which is converted into UDP-GlcNAc by the transfer of uridine 5-monophosphate (from uridine 5-triphosphate), a reaction catalyzed by the N-terminal domain.</text>
</comment>
<comment type="catalytic activity">
    <reaction evidence="1">
        <text>alpha-D-glucosamine 1-phosphate + acetyl-CoA = N-acetyl-alpha-D-glucosamine 1-phosphate + CoA + H(+)</text>
        <dbReference type="Rhea" id="RHEA:13725"/>
        <dbReference type="ChEBI" id="CHEBI:15378"/>
        <dbReference type="ChEBI" id="CHEBI:57287"/>
        <dbReference type="ChEBI" id="CHEBI:57288"/>
        <dbReference type="ChEBI" id="CHEBI:57776"/>
        <dbReference type="ChEBI" id="CHEBI:58516"/>
        <dbReference type="EC" id="2.3.1.157"/>
    </reaction>
</comment>
<comment type="catalytic activity">
    <reaction evidence="1">
        <text>N-acetyl-alpha-D-glucosamine 1-phosphate + UTP + H(+) = UDP-N-acetyl-alpha-D-glucosamine + diphosphate</text>
        <dbReference type="Rhea" id="RHEA:13509"/>
        <dbReference type="ChEBI" id="CHEBI:15378"/>
        <dbReference type="ChEBI" id="CHEBI:33019"/>
        <dbReference type="ChEBI" id="CHEBI:46398"/>
        <dbReference type="ChEBI" id="CHEBI:57705"/>
        <dbReference type="ChEBI" id="CHEBI:57776"/>
        <dbReference type="EC" id="2.7.7.23"/>
    </reaction>
</comment>
<comment type="cofactor">
    <cofactor evidence="1">
        <name>Mg(2+)</name>
        <dbReference type="ChEBI" id="CHEBI:18420"/>
    </cofactor>
    <text evidence="1">Binds 1 Mg(2+) ion per subunit.</text>
</comment>
<comment type="pathway">
    <text evidence="1">Nucleotide-sugar biosynthesis; UDP-N-acetyl-alpha-D-glucosamine biosynthesis; N-acetyl-alpha-D-glucosamine 1-phosphate from alpha-D-glucosamine 6-phosphate (route II): step 2/2.</text>
</comment>
<comment type="pathway">
    <text evidence="1">Nucleotide-sugar biosynthesis; UDP-N-acetyl-alpha-D-glucosamine biosynthesis; UDP-N-acetyl-alpha-D-glucosamine from N-acetyl-alpha-D-glucosamine 1-phosphate: step 1/1.</text>
</comment>
<comment type="pathway">
    <text evidence="1">Bacterial outer membrane biogenesis; LPS lipid A biosynthesis.</text>
</comment>
<comment type="subunit">
    <text evidence="1">Homotrimer.</text>
</comment>
<comment type="subcellular location">
    <subcellularLocation>
        <location evidence="1">Cytoplasm</location>
    </subcellularLocation>
</comment>
<comment type="similarity">
    <text evidence="1">In the N-terminal section; belongs to the N-acetylglucosamine-1-phosphate uridyltransferase family.</text>
</comment>
<comment type="similarity">
    <text evidence="1">In the C-terminal section; belongs to the transferase hexapeptide repeat family.</text>
</comment>
<feature type="chain" id="PRO_1000186387" description="Bifunctional protein GlmU">
    <location>
        <begin position="1"/>
        <end position="454"/>
    </location>
</feature>
<feature type="region of interest" description="Pyrophosphorylase" evidence="1">
    <location>
        <begin position="1"/>
        <end position="227"/>
    </location>
</feature>
<feature type="region of interest" description="Linker" evidence="1">
    <location>
        <begin position="228"/>
        <end position="248"/>
    </location>
</feature>
<feature type="region of interest" description="N-acetyltransferase" evidence="1">
    <location>
        <begin position="249"/>
        <end position="454"/>
    </location>
</feature>
<feature type="active site" description="Proton acceptor" evidence="1">
    <location>
        <position position="361"/>
    </location>
</feature>
<feature type="binding site" evidence="1">
    <location>
        <begin position="9"/>
        <end position="12"/>
    </location>
    <ligand>
        <name>UDP-N-acetyl-alpha-D-glucosamine</name>
        <dbReference type="ChEBI" id="CHEBI:57705"/>
    </ligand>
</feature>
<feature type="binding site" evidence="1">
    <location>
        <position position="23"/>
    </location>
    <ligand>
        <name>UDP-N-acetyl-alpha-D-glucosamine</name>
        <dbReference type="ChEBI" id="CHEBI:57705"/>
    </ligand>
</feature>
<feature type="binding site" evidence="1">
    <location>
        <position position="74"/>
    </location>
    <ligand>
        <name>UDP-N-acetyl-alpha-D-glucosamine</name>
        <dbReference type="ChEBI" id="CHEBI:57705"/>
    </ligand>
</feature>
<feature type="binding site" evidence="1">
    <location>
        <begin position="79"/>
        <end position="80"/>
    </location>
    <ligand>
        <name>UDP-N-acetyl-alpha-D-glucosamine</name>
        <dbReference type="ChEBI" id="CHEBI:57705"/>
    </ligand>
</feature>
<feature type="binding site" evidence="1">
    <location>
        <begin position="101"/>
        <end position="103"/>
    </location>
    <ligand>
        <name>UDP-N-acetyl-alpha-D-glucosamine</name>
        <dbReference type="ChEBI" id="CHEBI:57705"/>
    </ligand>
</feature>
<feature type="binding site" evidence="1">
    <location>
        <position position="103"/>
    </location>
    <ligand>
        <name>Mg(2+)</name>
        <dbReference type="ChEBI" id="CHEBI:18420"/>
    </ligand>
</feature>
<feature type="binding site" evidence="1">
    <location>
        <position position="138"/>
    </location>
    <ligand>
        <name>UDP-N-acetyl-alpha-D-glucosamine</name>
        <dbReference type="ChEBI" id="CHEBI:57705"/>
    </ligand>
</feature>
<feature type="binding site" evidence="1">
    <location>
        <position position="152"/>
    </location>
    <ligand>
        <name>UDP-N-acetyl-alpha-D-glucosamine</name>
        <dbReference type="ChEBI" id="CHEBI:57705"/>
    </ligand>
</feature>
<feature type="binding site" evidence="1">
    <location>
        <position position="167"/>
    </location>
    <ligand>
        <name>UDP-N-acetyl-alpha-D-glucosamine</name>
        <dbReference type="ChEBI" id="CHEBI:57705"/>
    </ligand>
</feature>
<feature type="binding site" evidence="1">
    <location>
        <position position="225"/>
    </location>
    <ligand>
        <name>Mg(2+)</name>
        <dbReference type="ChEBI" id="CHEBI:18420"/>
    </ligand>
</feature>
<feature type="binding site" evidence="1">
    <location>
        <position position="225"/>
    </location>
    <ligand>
        <name>UDP-N-acetyl-alpha-D-glucosamine</name>
        <dbReference type="ChEBI" id="CHEBI:57705"/>
    </ligand>
</feature>
<feature type="binding site" evidence="1">
    <location>
        <position position="331"/>
    </location>
    <ligand>
        <name>UDP-N-acetyl-alpha-D-glucosamine</name>
        <dbReference type="ChEBI" id="CHEBI:57705"/>
    </ligand>
</feature>
<feature type="binding site" evidence="1">
    <location>
        <position position="349"/>
    </location>
    <ligand>
        <name>UDP-N-acetyl-alpha-D-glucosamine</name>
        <dbReference type="ChEBI" id="CHEBI:57705"/>
    </ligand>
</feature>
<feature type="binding site" evidence="1">
    <location>
        <position position="364"/>
    </location>
    <ligand>
        <name>UDP-N-acetyl-alpha-D-glucosamine</name>
        <dbReference type="ChEBI" id="CHEBI:57705"/>
    </ligand>
</feature>
<feature type="binding site" evidence="1">
    <location>
        <position position="375"/>
    </location>
    <ligand>
        <name>UDP-N-acetyl-alpha-D-glucosamine</name>
        <dbReference type="ChEBI" id="CHEBI:57705"/>
    </ligand>
</feature>
<feature type="binding site" evidence="1">
    <location>
        <position position="378"/>
    </location>
    <ligand>
        <name>acetyl-CoA</name>
        <dbReference type="ChEBI" id="CHEBI:57288"/>
    </ligand>
</feature>
<feature type="binding site" evidence="1">
    <location>
        <begin position="384"/>
        <end position="385"/>
    </location>
    <ligand>
        <name>acetyl-CoA</name>
        <dbReference type="ChEBI" id="CHEBI:57288"/>
    </ligand>
</feature>
<feature type="binding site" evidence="1">
    <location>
        <position position="403"/>
    </location>
    <ligand>
        <name>acetyl-CoA</name>
        <dbReference type="ChEBI" id="CHEBI:57288"/>
    </ligand>
</feature>
<feature type="binding site" evidence="1">
    <location>
        <position position="421"/>
    </location>
    <ligand>
        <name>acetyl-CoA</name>
        <dbReference type="ChEBI" id="CHEBI:57288"/>
    </ligand>
</feature>
<feature type="binding site" evidence="1">
    <location>
        <position position="438"/>
    </location>
    <ligand>
        <name>acetyl-CoA</name>
        <dbReference type="ChEBI" id="CHEBI:57288"/>
    </ligand>
</feature>
<evidence type="ECO:0000255" key="1">
    <source>
        <dbReference type="HAMAP-Rule" id="MF_01631"/>
    </source>
</evidence>
<dbReference type="EC" id="2.7.7.23" evidence="1"/>
<dbReference type="EC" id="2.3.1.157" evidence="1"/>
<dbReference type="EMBL" id="CP000687">
    <property type="protein sequence ID" value="ABY69151.1"/>
    <property type="molecule type" value="Genomic_DNA"/>
</dbReference>
<dbReference type="RefSeq" id="WP_012262868.1">
    <property type="nucleotide sequence ID" value="NC_010278.1"/>
</dbReference>
<dbReference type="SMR" id="B0BUE6"/>
<dbReference type="KEGG" id="apj:APJL_0581"/>
<dbReference type="HOGENOM" id="CLU_029499_15_2_6"/>
<dbReference type="UniPathway" id="UPA00113">
    <property type="reaction ID" value="UER00532"/>
</dbReference>
<dbReference type="UniPathway" id="UPA00113">
    <property type="reaction ID" value="UER00533"/>
</dbReference>
<dbReference type="UniPathway" id="UPA00973"/>
<dbReference type="Proteomes" id="UP000008547">
    <property type="component" value="Chromosome"/>
</dbReference>
<dbReference type="GO" id="GO:0005737">
    <property type="term" value="C:cytoplasm"/>
    <property type="evidence" value="ECO:0007669"/>
    <property type="project" value="UniProtKB-SubCell"/>
</dbReference>
<dbReference type="GO" id="GO:0016020">
    <property type="term" value="C:membrane"/>
    <property type="evidence" value="ECO:0007669"/>
    <property type="project" value="GOC"/>
</dbReference>
<dbReference type="GO" id="GO:0019134">
    <property type="term" value="F:glucosamine-1-phosphate N-acetyltransferase activity"/>
    <property type="evidence" value="ECO:0007669"/>
    <property type="project" value="UniProtKB-UniRule"/>
</dbReference>
<dbReference type="GO" id="GO:0000287">
    <property type="term" value="F:magnesium ion binding"/>
    <property type="evidence" value="ECO:0007669"/>
    <property type="project" value="UniProtKB-UniRule"/>
</dbReference>
<dbReference type="GO" id="GO:0003977">
    <property type="term" value="F:UDP-N-acetylglucosamine diphosphorylase activity"/>
    <property type="evidence" value="ECO:0007669"/>
    <property type="project" value="UniProtKB-UniRule"/>
</dbReference>
<dbReference type="GO" id="GO:0000902">
    <property type="term" value="P:cell morphogenesis"/>
    <property type="evidence" value="ECO:0007669"/>
    <property type="project" value="UniProtKB-UniRule"/>
</dbReference>
<dbReference type="GO" id="GO:0071555">
    <property type="term" value="P:cell wall organization"/>
    <property type="evidence" value="ECO:0007669"/>
    <property type="project" value="UniProtKB-KW"/>
</dbReference>
<dbReference type="GO" id="GO:0009245">
    <property type="term" value="P:lipid A biosynthetic process"/>
    <property type="evidence" value="ECO:0007669"/>
    <property type="project" value="UniProtKB-UniRule"/>
</dbReference>
<dbReference type="GO" id="GO:0009252">
    <property type="term" value="P:peptidoglycan biosynthetic process"/>
    <property type="evidence" value="ECO:0007669"/>
    <property type="project" value="UniProtKB-UniRule"/>
</dbReference>
<dbReference type="GO" id="GO:0008360">
    <property type="term" value="P:regulation of cell shape"/>
    <property type="evidence" value="ECO:0007669"/>
    <property type="project" value="UniProtKB-KW"/>
</dbReference>
<dbReference type="GO" id="GO:0006048">
    <property type="term" value="P:UDP-N-acetylglucosamine biosynthetic process"/>
    <property type="evidence" value="ECO:0007669"/>
    <property type="project" value="UniProtKB-UniPathway"/>
</dbReference>
<dbReference type="CDD" id="cd02540">
    <property type="entry name" value="GT2_GlmU_N_bac"/>
    <property type="match status" value="1"/>
</dbReference>
<dbReference type="CDD" id="cd03353">
    <property type="entry name" value="LbH_GlmU_C"/>
    <property type="match status" value="1"/>
</dbReference>
<dbReference type="FunFam" id="3.90.550.10:FF:000006">
    <property type="entry name" value="Bifunctional protein GlmU"/>
    <property type="match status" value="1"/>
</dbReference>
<dbReference type="Gene3D" id="2.160.10.10">
    <property type="entry name" value="Hexapeptide repeat proteins"/>
    <property type="match status" value="1"/>
</dbReference>
<dbReference type="Gene3D" id="3.90.550.10">
    <property type="entry name" value="Spore Coat Polysaccharide Biosynthesis Protein SpsA, Chain A"/>
    <property type="match status" value="1"/>
</dbReference>
<dbReference type="HAMAP" id="MF_01631">
    <property type="entry name" value="GlmU"/>
    <property type="match status" value="1"/>
</dbReference>
<dbReference type="InterPro" id="IPR005882">
    <property type="entry name" value="Bifunctional_GlmU"/>
</dbReference>
<dbReference type="InterPro" id="IPR050065">
    <property type="entry name" value="GlmU-like"/>
</dbReference>
<dbReference type="InterPro" id="IPR038009">
    <property type="entry name" value="GlmU_C_LbH"/>
</dbReference>
<dbReference type="InterPro" id="IPR001451">
    <property type="entry name" value="Hexapep"/>
</dbReference>
<dbReference type="InterPro" id="IPR018357">
    <property type="entry name" value="Hexapep_transf_CS"/>
</dbReference>
<dbReference type="InterPro" id="IPR025877">
    <property type="entry name" value="MobA-like_NTP_Trfase"/>
</dbReference>
<dbReference type="InterPro" id="IPR029044">
    <property type="entry name" value="Nucleotide-diphossugar_trans"/>
</dbReference>
<dbReference type="InterPro" id="IPR011004">
    <property type="entry name" value="Trimer_LpxA-like_sf"/>
</dbReference>
<dbReference type="NCBIfam" id="TIGR01173">
    <property type="entry name" value="glmU"/>
    <property type="match status" value="1"/>
</dbReference>
<dbReference type="NCBIfam" id="NF006986">
    <property type="entry name" value="PRK09451.1"/>
    <property type="match status" value="1"/>
</dbReference>
<dbReference type="PANTHER" id="PTHR43584:SF3">
    <property type="entry name" value="BIFUNCTIONAL PROTEIN GLMU"/>
    <property type="match status" value="1"/>
</dbReference>
<dbReference type="PANTHER" id="PTHR43584">
    <property type="entry name" value="NUCLEOTIDYL TRANSFERASE"/>
    <property type="match status" value="1"/>
</dbReference>
<dbReference type="Pfam" id="PF00132">
    <property type="entry name" value="Hexapep"/>
    <property type="match status" value="1"/>
</dbReference>
<dbReference type="Pfam" id="PF12804">
    <property type="entry name" value="NTP_transf_3"/>
    <property type="match status" value="1"/>
</dbReference>
<dbReference type="SUPFAM" id="SSF53448">
    <property type="entry name" value="Nucleotide-diphospho-sugar transferases"/>
    <property type="match status" value="1"/>
</dbReference>
<dbReference type="SUPFAM" id="SSF51161">
    <property type="entry name" value="Trimeric LpxA-like enzymes"/>
    <property type="match status" value="1"/>
</dbReference>
<dbReference type="PROSITE" id="PS00101">
    <property type="entry name" value="HEXAPEP_TRANSFERASES"/>
    <property type="match status" value="1"/>
</dbReference>
<proteinExistence type="inferred from homology"/>
<protein>
    <recommendedName>
        <fullName evidence="1">Bifunctional protein GlmU</fullName>
    </recommendedName>
    <domain>
        <recommendedName>
            <fullName evidence="1">UDP-N-acetylglucosamine pyrophosphorylase</fullName>
            <ecNumber evidence="1">2.7.7.23</ecNumber>
        </recommendedName>
        <alternativeName>
            <fullName evidence="1">N-acetylglucosamine-1-phosphate uridyltransferase</fullName>
        </alternativeName>
    </domain>
    <domain>
        <recommendedName>
            <fullName evidence="1">Glucosamine-1-phosphate N-acetyltransferase</fullName>
            <ecNumber evidence="1">2.3.1.157</ecNumber>
        </recommendedName>
    </domain>
</protein>
<name>GLMU_ACTPJ</name>
<sequence length="454" mass="48987">MTQLSVVILAAGKGTRMYSDLPKVLHTVAGKPMVQHVIDTAKQIDAKQIHLIYGHGGELLQQRLSSEPVNWVLQAEQLGTGHAMQQAAPFFADDENILMLYGDAPLITKETLERLIAAKPANGIALLTVELENPNGYGRIIRENGSVVAIVEQKDANAEQLKICEVNTGVMVASGASFKKWLANLNNNNAQGEYYITDVIAMANQDGYKVQAVQASEFMEVEGANNRLQLAALERFYQKTQAEKLLLAGVRLIDPARFDIRGSLTHGKDVEIDVNVIIEGEVKLGNRVRICAGCVLKNCEIGDDVEIKPYSVIEDAVVGKAAQIGPFSRLRPGANLAEETHVGNFVEIKNAQIGKGSKVNHLTYVGDAEVGSNCNIGAGVITCNYDGANKFKTIIGNNVFVGSDSQLVAPVTIADGATIGAGATVTKDVAENELVISRVPQRHIQGWQRPTKKK</sequence>
<gene>
    <name evidence="1" type="primary">glmU</name>
    <name type="ordered locus">APJL_0581</name>
</gene>
<keyword id="KW-0012">Acyltransferase</keyword>
<keyword id="KW-0133">Cell shape</keyword>
<keyword id="KW-0961">Cell wall biogenesis/degradation</keyword>
<keyword id="KW-0963">Cytoplasm</keyword>
<keyword id="KW-0460">Magnesium</keyword>
<keyword id="KW-0479">Metal-binding</keyword>
<keyword id="KW-0511">Multifunctional enzyme</keyword>
<keyword id="KW-0548">Nucleotidyltransferase</keyword>
<keyword id="KW-0573">Peptidoglycan synthesis</keyword>
<keyword id="KW-0677">Repeat</keyword>
<keyword id="KW-0808">Transferase</keyword>
<organism>
    <name type="scientific">Actinobacillus pleuropneumoniae serotype 3 (strain JL03)</name>
    <dbReference type="NCBI Taxonomy" id="434271"/>
    <lineage>
        <taxon>Bacteria</taxon>
        <taxon>Pseudomonadati</taxon>
        <taxon>Pseudomonadota</taxon>
        <taxon>Gammaproteobacteria</taxon>
        <taxon>Pasteurellales</taxon>
        <taxon>Pasteurellaceae</taxon>
        <taxon>Actinobacillus</taxon>
    </lineage>
</organism>